<gene>
    <name evidence="3" type="primary">bioCD</name>
    <name type="ordered locus">BAV2451</name>
</gene>
<accession>Q2KXN6</accession>
<comment type="function">
    <text evidence="1">Converts the free carboxyl group of a malonyl-thioester to its methyl ester by transfer of a methyl group from S-adenosyl-L-methionine (SAM). It allows synthesis of pimeloyl-ACP via the fatty acid synthetic pathway (By similarity).</text>
</comment>
<comment type="function">
    <text evidence="2">Catalyzes a mechanistically unusual reaction, the ATP-dependent insertion of CO2 between the N7 and N8 nitrogen atoms of 7,8-diaminopelargonic acid (DAPA, also called 7,8-diammoniononanoate) to form a ureido ring.</text>
</comment>
<comment type="catalytic activity">
    <reaction evidence="2">
        <text>(7R,8S)-7,8-diammoniononanoate + CO2 + ATP = (4R,5S)-dethiobiotin + ADP + phosphate + 3 H(+)</text>
        <dbReference type="Rhea" id="RHEA:15805"/>
        <dbReference type="ChEBI" id="CHEBI:15378"/>
        <dbReference type="ChEBI" id="CHEBI:16526"/>
        <dbReference type="ChEBI" id="CHEBI:30616"/>
        <dbReference type="ChEBI" id="CHEBI:43474"/>
        <dbReference type="ChEBI" id="CHEBI:149469"/>
        <dbReference type="ChEBI" id="CHEBI:149473"/>
        <dbReference type="ChEBI" id="CHEBI:456216"/>
        <dbReference type="EC" id="6.3.3.3"/>
    </reaction>
</comment>
<comment type="catalytic activity">
    <reaction evidence="1">
        <text>malonyl-[ACP] + S-adenosyl-L-methionine = malonyl-[ACP] methyl ester + S-adenosyl-L-homocysteine</text>
        <dbReference type="Rhea" id="RHEA:17105"/>
        <dbReference type="Rhea" id="RHEA-COMP:9623"/>
        <dbReference type="Rhea" id="RHEA-COMP:9954"/>
        <dbReference type="ChEBI" id="CHEBI:57856"/>
        <dbReference type="ChEBI" id="CHEBI:59789"/>
        <dbReference type="ChEBI" id="CHEBI:78449"/>
        <dbReference type="ChEBI" id="CHEBI:78845"/>
        <dbReference type="EC" id="2.1.1.197"/>
    </reaction>
</comment>
<comment type="cofactor">
    <cofactor evidence="2">
        <name>Mg(2+)</name>
        <dbReference type="ChEBI" id="CHEBI:18420"/>
    </cofactor>
</comment>
<comment type="pathway">
    <text evidence="2">Cofactor biosynthesis; biotin biosynthesis; biotin from 7,8-diaminononanoate: step 1/2.</text>
</comment>
<comment type="pathway">
    <text evidence="1">Cofactor biosynthesis; biotin biosynthesis.</text>
</comment>
<comment type="subcellular location">
    <subcellularLocation>
        <location evidence="2">Cytoplasm</location>
    </subcellularLocation>
</comment>
<comment type="similarity">
    <text evidence="1">In the N-terminal section; belongs to the methyltransferase superfamily.</text>
</comment>
<comment type="similarity">
    <text evidence="2">In the C-terminal section; belongs to the dethiobiotin synthetase family.</text>
</comment>
<sequence>MTPFLPDRSIAKRFDAAADRYEHHAWAQRHAAEALAERIAALALPAKPRILEIGCGTGLLTRALARRLGPADWTLSDIAPDMLRQARANLNLPARYLRMDGEHPAGLDGQYDLICSSLAVQWFGDLNAGLARLTRWLRPGGHLAIATLAQESFKEWHQAHAVLSLRAATPEYPPVADIRAGLLPGRVDSEQHVQSHHSGLAFLRGLKGIGATAPRAGHQPLNTAQLRAVLRQFDRQGACVTYQFAYGQWRKPRGVFVTGTDTGVGKTLVSALLTRAWQADYWKPLQTGLAEESGDSATVAALARLPPERLHAPAYALQAPLAPWAAASLENTCIDATRLTLPETAAPLVVEGAGGLYVPIDERSLIIDLIDNLGLPVVLAARSGLGTINHTLLSLEALRARKLPVLGVIMSGPPSDDNRRAIEHFGRIPVLAQIPQLDVVDAQAVDLWSKQLPTLDSLLSSNASR</sequence>
<protein>
    <recommendedName>
        <fullName evidence="3">Biotin biosynthesis bifunctional protein BioCD</fullName>
    </recommendedName>
    <domain>
        <recommendedName>
            <fullName evidence="1">Malonyl-[acyl-carrier protein] O-methyltransferase</fullName>
            <shortName>Malonyl-ACP O-methyltransferase</shortName>
            <ecNumber evidence="1">2.1.1.197</ecNumber>
        </recommendedName>
        <alternativeName>
            <fullName>Biotin synthesis protein BioC</fullName>
        </alternativeName>
    </domain>
    <domain>
        <recommendedName>
            <fullName evidence="2">ATP-dependent dethiobiotin synthetase BioD</fullName>
            <ecNumber evidence="2">6.3.3.3</ecNumber>
        </recommendedName>
        <alternativeName>
            <fullName evidence="2">DTB synthetase</fullName>
            <shortName evidence="2">DTBS</shortName>
        </alternativeName>
        <alternativeName>
            <fullName evidence="2">Dethiobiotin synthase</fullName>
        </alternativeName>
    </domain>
</protein>
<reference key="1">
    <citation type="journal article" date="2006" name="J. Bacteriol.">
        <title>Comparison of the genome sequence of the poultry pathogen Bordetella avium with those of B. bronchiseptica, B. pertussis, and B. parapertussis reveals extensive diversity in surface structures associated with host interaction.</title>
        <authorList>
            <person name="Sebaihia M."/>
            <person name="Preston A."/>
            <person name="Maskell D.J."/>
            <person name="Kuzmiak H."/>
            <person name="Connell T.D."/>
            <person name="King N.D."/>
            <person name="Orndorff P.E."/>
            <person name="Miyamoto D.M."/>
            <person name="Thomson N.R."/>
            <person name="Harris D."/>
            <person name="Goble A."/>
            <person name="Lord A."/>
            <person name="Murphy L."/>
            <person name="Quail M.A."/>
            <person name="Rutter S."/>
            <person name="Squares R."/>
            <person name="Squares S."/>
            <person name="Woodward J."/>
            <person name="Parkhill J."/>
            <person name="Temple L.M."/>
        </authorList>
    </citation>
    <scope>NUCLEOTIDE SEQUENCE [LARGE SCALE GENOMIC DNA]</scope>
    <source>
        <strain>197N</strain>
    </source>
</reference>
<keyword id="KW-0067">ATP-binding</keyword>
<keyword id="KW-0093">Biotin biosynthesis</keyword>
<keyword id="KW-0963">Cytoplasm</keyword>
<keyword id="KW-0378">Hydrolase</keyword>
<keyword id="KW-0436">Ligase</keyword>
<keyword id="KW-0460">Magnesium</keyword>
<keyword id="KW-0479">Metal-binding</keyword>
<keyword id="KW-0489">Methyltransferase</keyword>
<keyword id="KW-0511">Multifunctional enzyme</keyword>
<keyword id="KW-0547">Nucleotide-binding</keyword>
<keyword id="KW-1185">Reference proteome</keyword>
<keyword id="KW-0949">S-adenosyl-L-methionine</keyword>
<keyword id="KW-0808">Transferase</keyword>
<feature type="chain" id="PRO_0000412486" description="Biotin biosynthesis bifunctional protein BioCD">
    <location>
        <begin position="1"/>
        <end position="465"/>
    </location>
</feature>
<feature type="region of interest" description="Malonyl-ACP O-methyltransferase">
    <location>
        <begin position="1"/>
        <end position="254"/>
    </location>
</feature>
<feature type="region of interest" description="DTB synthetase">
    <location>
        <begin position="255"/>
        <end position="465"/>
    </location>
</feature>
<feature type="active site" evidence="2">
    <location>
        <position position="283"/>
    </location>
</feature>
<feature type="binding site" evidence="2">
    <location>
        <position position="234"/>
    </location>
    <ligand>
        <name>ATP</name>
        <dbReference type="ChEBI" id="CHEBI:30616"/>
    </ligand>
</feature>
<feature type="binding site" evidence="2">
    <location>
        <begin position="263"/>
        <end position="268"/>
    </location>
    <ligand>
        <name>ATP</name>
        <dbReference type="ChEBI" id="CHEBI:30616"/>
    </ligand>
</feature>
<feature type="binding site" evidence="2">
    <location>
        <position position="267"/>
    </location>
    <ligand>
        <name>Mg(2+)</name>
        <dbReference type="ChEBI" id="CHEBI:18420"/>
    </ligand>
</feature>
<feature type="binding site" evidence="2">
    <location>
        <position position="287"/>
    </location>
    <ligand>
        <name>substrate</name>
    </ligand>
</feature>
<feature type="binding site" evidence="2">
    <location>
        <position position="295"/>
    </location>
    <ligand>
        <name>ATP</name>
        <dbReference type="ChEBI" id="CHEBI:30616"/>
    </ligand>
</feature>
<feature type="binding site" evidence="2">
    <location>
        <position position="295"/>
    </location>
    <ligand>
        <name>Mg(2+)</name>
        <dbReference type="ChEBI" id="CHEBI:18420"/>
    </ligand>
</feature>
<feature type="binding site" evidence="2">
    <location>
        <begin position="351"/>
        <end position="354"/>
    </location>
    <ligand>
        <name>ATP</name>
        <dbReference type="ChEBI" id="CHEBI:30616"/>
    </ligand>
</feature>
<feature type="binding site" evidence="2">
    <location>
        <position position="351"/>
    </location>
    <ligand>
        <name>Mg(2+)</name>
        <dbReference type="ChEBI" id="CHEBI:18420"/>
    </ligand>
</feature>
<feature type="binding site" evidence="2">
    <location>
        <begin position="435"/>
        <end position="437"/>
    </location>
    <ligand>
        <name>ATP</name>
        <dbReference type="ChEBI" id="CHEBI:30616"/>
    </ligand>
</feature>
<dbReference type="EC" id="2.1.1.197" evidence="1"/>
<dbReference type="EC" id="6.3.3.3" evidence="2"/>
<dbReference type="EMBL" id="AM167904">
    <property type="protein sequence ID" value="CAJ50061.1"/>
    <property type="molecule type" value="Genomic_DNA"/>
</dbReference>
<dbReference type="RefSeq" id="WP_012418111.1">
    <property type="nucleotide sequence ID" value="NC_010645.1"/>
</dbReference>
<dbReference type="SMR" id="Q2KXN6"/>
<dbReference type="STRING" id="360910.BAV2451"/>
<dbReference type="KEGG" id="bav:BAV2451"/>
<dbReference type="eggNOG" id="COG0132">
    <property type="taxonomic scope" value="Bacteria"/>
</dbReference>
<dbReference type="eggNOG" id="COG4106">
    <property type="taxonomic scope" value="Bacteria"/>
</dbReference>
<dbReference type="HOGENOM" id="CLU_046963_0_0_4"/>
<dbReference type="OrthoDB" id="9802097at2"/>
<dbReference type="UniPathway" id="UPA00078"/>
<dbReference type="UniPathway" id="UPA00078">
    <property type="reaction ID" value="UER00161"/>
</dbReference>
<dbReference type="Proteomes" id="UP000001977">
    <property type="component" value="Chromosome"/>
</dbReference>
<dbReference type="GO" id="GO:0005737">
    <property type="term" value="C:cytoplasm"/>
    <property type="evidence" value="ECO:0007669"/>
    <property type="project" value="UniProtKB-SubCell"/>
</dbReference>
<dbReference type="GO" id="GO:0005524">
    <property type="term" value="F:ATP binding"/>
    <property type="evidence" value="ECO:0007669"/>
    <property type="project" value="UniProtKB-UniRule"/>
</dbReference>
<dbReference type="GO" id="GO:0004141">
    <property type="term" value="F:dethiobiotin synthase activity"/>
    <property type="evidence" value="ECO:0007669"/>
    <property type="project" value="UniProtKB-UniRule"/>
</dbReference>
<dbReference type="GO" id="GO:0016787">
    <property type="term" value="F:hydrolase activity"/>
    <property type="evidence" value="ECO:0007669"/>
    <property type="project" value="UniProtKB-KW"/>
</dbReference>
<dbReference type="GO" id="GO:0000287">
    <property type="term" value="F:magnesium ion binding"/>
    <property type="evidence" value="ECO:0007669"/>
    <property type="project" value="UniProtKB-UniRule"/>
</dbReference>
<dbReference type="GO" id="GO:0102130">
    <property type="term" value="F:malonyl-CoA methyltransferase activity"/>
    <property type="evidence" value="ECO:0007669"/>
    <property type="project" value="UniProtKB-EC"/>
</dbReference>
<dbReference type="GO" id="GO:0009102">
    <property type="term" value="P:biotin biosynthetic process"/>
    <property type="evidence" value="ECO:0007669"/>
    <property type="project" value="UniProtKB-UniRule"/>
</dbReference>
<dbReference type="GO" id="GO:0032259">
    <property type="term" value="P:methylation"/>
    <property type="evidence" value="ECO:0007669"/>
    <property type="project" value="UniProtKB-KW"/>
</dbReference>
<dbReference type="CDD" id="cd02440">
    <property type="entry name" value="AdoMet_MTases"/>
    <property type="match status" value="1"/>
</dbReference>
<dbReference type="CDD" id="cd03109">
    <property type="entry name" value="DTBS"/>
    <property type="match status" value="1"/>
</dbReference>
<dbReference type="Gene3D" id="3.40.50.300">
    <property type="entry name" value="P-loop containing nucleotide triphosphate hydrolases"/>
    <property type="match status" value="1"/>
</dbReference>
<dbReference type="Gene3D" id="3.40.50.150">
    <property type="entry name" value="Vaccinia Virus protein VP39"/>
    <property type="match status" value="1"/>
</dbReference>
<dbReference type="HAMAP" id="MF_00336">
    <property type="entry name" value="BioD"/>
    <property type="match status" value="1"/>
</dbReference>
<dbReference type="InterPro" id="IPR004472">
    <property type="entry name" value="DTB_synth_BioD"/>
</dbReference>
<dbReference type="InterPro" id="IPR041698">
    <property type="entry name" value="Methyltransf_25"/>
</dbReference>
<dbReference type="InterPro" id="IPR027417">
    <property type="entry name" value="P-loop_NTPase"/>
</dbReference>
<dbReference type="InterPro" id="IPR029063">
    <property type="entry name" value="SAM-dependent_MTases_sf"/>
</dbReference>
<dbReference type="NCBIfam" id="TIGR00347">
    <property type="entry name" value="bioD"/>
    <property type="match status" value="1"/>
</dbReference>
<dbReference type="PANTHER" id="PTHR43210">
    <property type="entry name" value="DETHIOBIOTIN SYNTHETASE"/>
    <property type="match status" value="1"/>
</dbReference>
<dbReference type="PANTHER" id="PTHR43210:SF5">
    <property type="entry name" value="DETHIOBIOTIN SYNTHETASE"/>
    <property type="match status" value="1"/>
</dbReference>
<dbReference type="Pfam" id="PF13500">
    <property type="entry name" value="AAA_26"/>
    <property type="match status" value="1"/>
</dbReference>
<dbReference type="Pfam" id="PF13649">
    <property type="entry name" value="Methyltransf_25"/>
    <property type="match status" value="1"/>
</dbReference>
<dbReference type="SUPFAM" id="SSF52540">
    <property type="entry name" value="P-loop containing nucleoside triphosphate hydrolases"/>
    <property type="match status" value="1"/>
</dbReference>
<dbReference type="SUPFAM" id="SSF53335">
    <property type="entry name" value="S-adenosyl-L-methionine-dependent methyltransferases"/>
    <property type="match status" value="1"/>
</dbReference>
<organism>
    <name type="scientific">Bordetella avium (strain 197N)</name>
    <dbReference type="NCBI Taxonomy" id="360910"/>
    <lineage>
        <taxon>Bacteria</taxon>
        <taxon>Pseudomonadati</taxon>
        <taxon>Pseudomonadota</taxon>
        <taxon>Betaproteobacteria</taxon>
        <taxon>Burkholderiales</taxon>
        <taxon>Alcaligenaceae</taxon>
        <taxon>Bordetella</taxon>
    </lineage>
</organism>
<evidence type="ECO:0000250" key="1">
    <source>
        <dbReference type="UniProtKB" id="P12999"/>
    </source>
</evidence>
<evidence type="ECO:0000255" key="2">
    <source>
        <dbReference type="HAMAP-Rule" id="MF_00336"/>
    </source>
</evidence>
<evidence type="ECO:0000305" key="3"/>
<proteinExistence type="inferred from homology"/>
<name>BIOCD_BORA1</name>